<proteinExistence type="inferred from homology"/>
<organism>
    <name type="scientific">Streptococcus pyogenes serotype M6 (strain ATCC BAA-946 / MGAS10394)</name>
    <dbReference type="NCBI Taxonomy" id="286636"/>
    <lineage>
        <taxon>Bacteria</taxon>
        <taxon>Bacillati</taxon>
        <taxon>Bacillota</taxon>
        <taxon>Bacilli</taxon>
        <taxon>Lactobacillales</taxon>
        <taxon>Streptococcaceae</taxon>
        <taxon>Streptococcus</taxon>
    </lineage>
</organism>
<sequence length="305" mass="34851">MSKKLTFQEIILTLQQYWNDQGCMLMQAYDNEKGAGTMSPYTFLRAIGPEPWNAAYVEPSRRPADGRYGENPNRLYQHHQFQVVMKPSPSNIQELYLASLEKLGINPLEHDIRFVEDNWENPSTGSAGLGWEVWLDGMEITQFTYFQQVGGLATSPVTAEVTYGLERLASYIQEVDSVYDIEWAPGVKYGEIFLQPEYEHSKYSFEMSDQDMLLENFEKFEKEASRALEEGLVHPAYDYVLKCSHTFNLLDARGAVSVTERAGYIARIRNLARVVAKTFVAERKKLGFPLLDEATRAILLAEDDE</sequence>
<feature type="chain" id="PRO_0000072873" description="Glycine--tRNA ligase alpha subunit">
    <location>
        <begin position="1"/>
        <end position="305"/>
    </location>
</feature>
<dbReference type="EC" id="6.1.1.14" evidence="1"/>
<dbReference type="EMBL" id="CP000003">
    <property type="protein sequence ID" value="AAT87568.1"/>
    <property type="molecule type" value="Genomic_DNA"/>
</dbReference>
<dbReference type="RefSeq" id="WP_011184849.1">
    <property type="nucleotide sequence ID" value="NC_006086.1"/>
</dbReference>
<dbReference type="SMR" id="Q5XAJ5"/>
<dbReference type="GeneID" id="69900452"/>
<dbReference type="KEGG" id="spa:M6_Spy1433"/>
<dbReference type="HOGENOM" id="CLU_057066_1_0_9"/>
<dbReference type="Proteomes" id="UP000001167">
    <property type="component" value="Chromosome"/>
</dbReference>
<dbReference type="GO" id="GO:0005829">
    <property type="term" value="C:cytosol"/>
    <property type="evidence" value="ECO:0007669"/>
    <property type="project" value="TreeGrafter"/>
</dbReference>
<dbReference type="GO" id="GO:0005524">
    <property type="term" value="F:ATP binding"/>
    <property type="evidence" value="ECO:0007669"/>
    <property type="project" value="UniProtKB-UniRule"/>
</dbReference>
<dbReference type="GO" id="GO:0140096">
    <property type="term" value="F:catalytic activity, acting on a protein"/>
    <property type="evidence" value="ECO:0007669"/>
    <property type="project" value="UniProtKB-ARBA"/>
</dbReference>
<dbReference type="GO" id="GO:0004820">
    <property type="term" value="F:glycine-tRNA ligase activity"/>
    <property type="evidence" value="ECO:0007669"/>
    <property type="project" value="UniProtKB-UniRule"/>
</dbReference>
<dbReference type="GO" id="GO:0016740">
    <property type="term" value="F:transferase activity"/>
    <property type="evidence" value="ECO:0007669"/>
    <property type="project" value="UniProtKB-ARBA"/>
</dbReference>
<dbReference type="GO" id="GO:0006426">
    <property type="term" value="P:glycyl-tRNA aminoacylation"/>
    <property type="evidence" value="ECO:0007669"/>
    <property type="project" value="UniProtKB-UniRule"/>
</dbReference>
<dbReference type="CDD" id="cd00733">
    <property type="entry name" value="GlyRS_alpha_core"/>
    <property type="match status" value="1"/>
</dbReference>
<dbReference type="FunFam" id="3.30.930.10:FF:000006">
    <property type="entry name" value="Glycine--tRNA ligase alpha subunit"/>
    <property type="match status" value="1"/>
</dbReference>
<dbReference type="Gene3D" id="3.30.930.10">
    <property type="entry name" value="Bira Bifunctional Protein, Domain 2"/>
    <property type="match status" value="1"/>
</dbReference>
<dbReference type="Gene3D" id="1.20.58.180">
    <property type="entry name" value="Class II aaRS and biotin synthetases, domain 2"/>
    <property type="match status" value="1"/>
</dbReference>
<dbReference type="HAMAP" id="MF_00254">
    <property type="entry name" value="Gly_tRNA_synth_alpha"/>
    <property type="match status" value="1"/>
</dbReference>
<dbReference type="InterPro" id="IPR045864">
    <property type="entry name" value="aa-tRNA-synth_II/BPL/LPL"/>
</dbReference>
<dbReference type="InterPro" id="IPR006194">
    <property type="entry name" value="Gly-tRNA-synth_heterodimer"/>
</dbReference>
<dbReference type="InterPro" id="IPR002310">
    <property type="entry name" value="Gly-tRNA_ligase_asu"/>
</dbReference>
<dbReference type="NCBIfam" id="TIGR00388">
    <property type="entry name" value="glyQ"/>
    <property type="match status" value="1"/>
</dbReference>
<dbReference type="NCBIfam" id="NF006827">
    <property type="entry name" value="PRK09348.1"/>
    <property type="match status" value="1"/>
</dbReference>
<dbReference type="PANTHER" id="PTHR30075:SF2">
    <property type="entry name" value="GLYCINE--TRNA LIGASE, CHLOROPLASTIC_MITOCHONDRIAL 2"/>
    <property type="match status" value="1"/>
</dbReference>
<dbReference type="PANTHER" id="PTHR30075">
    <property type="entry name" value="GLYCYL-TRNA SYNTHETASE"/>
    <property type="match status" value="1"/>
</dbReference>
<dbReference type="Pfam" id="PF02091">
    <property type="entry name" value="tRNA-synt_2e"/>
    <property type="match status" value="1"/>
</dbReference>
<dbReference type="PRINTS" id="PR01044">
    <property type="entry name" value="TRNASYNTHGA"/>
</dbReference>
<dbReference type="SUPFAM" id="SSF55681">
    <property type="entry name" value="Class II aaRS and biotin synthetases"/>
    <property type="match status" value="1"/>
</dbReference>
<dbReference type="PROSITE" id="PS50861">
    <property type="entry name" value="AA_TRNA_LIGASE_II_GLYAB"/>
    <property type="match status" value="1"/>
</dbReference>
<accession>Q5XAJ5</accession>
<comment type="catalytic activity">
    <reaction evidence="1">
        <text>tRNA(Gly) + glycine + ATP = glycyl-tRNA(Gly) + AMP + diphosphate</text>
        <dbReference type="Rhea" id="RHEA:16013"/>
        <dbReference type="Rhea" id="RHEA-COMP:9664"/>
        <dbReference type="Rhea" id="RHEA-COMP:9683"/>
        <dbReference type="ChEBI" id="CHEBI:30616"/>
        <dbReference type="ChEBI" id="CHEBI:33019"/>
        <dbReference type="ChEBI" id="CHEBI:57305"/>
        <dbReference type="ChEBI" id="CHEBI:78442"/>
        <dbReference type="ChEBI" id="CHEBI:78522"/>
        <dbReference type="ChEBI" id="CHEBI:456215"/>
        <dbReference type="EC" id="6.1.1.14"/>
    </reaction>
</comment>
<comment type="subunit">
    <text evidence="1">Tetramer of two alpha and two beta subunits.</text>
</comment>
<comment type="subcellular location">
    <subcellularLocation>
        <location evidence="1">Cytoplasm</location>
    </subcellularLocation>
</comment>
<comment type="similarity">
    <text evidence="1">Belongs to the class-II aminoacyl-tRNA synthetase family.</text>
</comment>
<name>SYGA_STRP6</name>
<reference key="1">
    <citation type="journal article" date="2004" name="J. Infect. Dis.">
        <title>Progress toward characterization of the group A Streptococcus metagenome: complete genome sequence of a macrolide-resistant serotype M6 strain.</title>
        <authorList>
            <person name="Banks D.J."/>
            <person name="Porcella S.F."/>
            <person name="Barbian K.D."/>
            <person name="Beres S.B."/>
            <person name="Philips L.E."/>
            <person name="Voyich J.M."/>
            <person name="DeLeo F.R."/>
            <person name="Martin J.M."/>
            <person name="Somerville G.A."/>
            <person name="Musser J.M."/>
        </authorList>
    </citation>
    <scope>NUCLEOTIDE SEQUENCE [LARGE SCALE GENOMIC DNA]</scope>
    <source>
        <strain>ATCC BAA-946 / MGAS10394</strain>
    </source>
</reference>
<evidence type="ECO:0000255" key="1">
    <source>
        <dbReference type="HAMAP-Rule" id="MF_00254"/>
    </source>
</evidence>
<protein>
    <recommendedName>
        <fullName evidence="1">Glycine--tRNA ligase alpha subunit</fullName>
        <ecNumber evidence="1">6.1.1.14</ecNumber>
    </recommendedName>
    <alternativeName>
        <fullName evidence="1">Glycyl-tRNA synthetase alpha subunit</fullName>
        <shortName evidence="1">GlyRS</shortName>
    </alternativeName>
</protein>
<keyword id="KW-0030">Aminoacyl-tRNA synthetase</keyword>
<keyword id="KW-0067">ATP-binding</keyword>
<keyword id="KW-0963">Cytoplasm</keyword>
<keyword id="KW-0436">Ligase</keyword>
<keyword id="KW-0547">Nucleotide-binding</keyword>
<keyword id="KW-0648">Protein biosynthesis</keyword>
<gene>
    <name evidence="1" type="primary">glyQ</name>
    <name type="ordered locus">M6_Spy1433</name>
</gene>